<name>ILVC_METTH</name>
<sequence length="328" mass="36494">MKIYYENDIDMEILADKKIAVIGYGSQGEAQARNMADSGLNVIVGLRRGGSSWKKAHDDGMNVMTIEDASREADIIHILIPDEIQETVFEQSIRPYLKEGNTISFSHGYNIHYGYIKAPEGVNVTMVAPKGPGAMVRRTYLEGFGIPGLVAVEVDATGDAMEQALAMAKACGLARAGVLETTFREETETDLFGEQAVLCGGVTELINTAFKTLVRAGYQPEIAYFETCHELKLIVDLIYERGFRGMWHNVSNTAEFGGLTRRGRIITEETEKEMDEILKEIQNGKFAKEWALENRAGAPMLKRMRKLESELEIEEVGSKLRKLCGLEK</sequence>
<comment type="function">
    <text evidence="1">Involved in the biosynthesis of branched-chain amino acids (BCAA). Catalyzes an alkyl-migration followed by a ketol-acid reduction of (S)-2-acetolactate (S2AL) to yield (R)-2,3-dihydroxy-isovalerate. In the isomerase reaction, S2AL is rearranged via a Mg-dependent methyl migration to produce 3-hydroxy-3-methyl-2-ketobutyrate (HMKB). In the reductase reaction, this 2-ketoacid undergoes a metal-dependent reduction by NADPH to yield (R)-2,3-dihydroxy-isovalerate.</text>
</comment>
<comment type="catalytic activity">
    <reaction evidence="1">
        <text>(2R)-2,3-dihydroxy-3-methylbutanoate + NADP(+) = (2S)-2-acetolactate + NADPH + H(+)</text>
        <dbReference type="Rhea" id="RHEA:22068"/>
        <dbReference type="ChEBI" id="CHEBI:15378"/>
        <dbReference type="ChEBI" id="CHEBI:49072"/>
        <dbReference type="ChEBI" id="CHEBI:57783"/>
        <dbReference type="ChEBI" id="CHEBI:58349"/>
        <dbReference type="ChEBI" id="CHEBI:58476"/>
        <dbReference type="EC" id="1.1.1.86"/>
    </reaction>
</comment>
<comment type="catalytic activity">
    <reaction evidence="1">
        <text>(2R,3R)-2,3-dihydroxy-3-methylpentanoate + NADP(+) = (S)-2-ethyl-2-hydroxy-3-oxobutanoate + NADPH + H(+)</text>
        <dbReference type="Rhea" id="RHEA:13493"/>
        <dbReference type="ChEBI" id="CHEBI:15378"/>
        <dbReference type="ChEBI" id="CHEBI:49256"/>
        <dbReference type="ChEBI" id="CHEBI:49258"/>
        <dbReference type="ChEBI" id="CHEBI:57783"/>
        <dbReference type="ChEBI" id="CHEBI:58349"/>
        <dbReference type="EC" id="1.1.1.86"/>
    </reaction>
</comment>
<comment type="cofactor">
    <cofactor evidence="1">
        <name>Mg(2+)</name>
        <dbReference type="ChEBI" id="CHEBI:18420"/>
    </cofactor>
    <text evidence="1">Binds 2 magnesium ions per subunit.</text>
</comment>
<comment type="pathway">
    <text evidence="1">Amino-acid biosynthesis; L-isoleucine biosynthesis; L-isoleucine from 2-oxobutanoate: step 2/4.</text>
</comment>
<comment type="pathway">
    <text evidence="1">Amino-acid biosynthesis; L-valine biosynthesis; L-valine from pyruvate: step 2/4.</text>
</comment>
<comment type="similarity">
    <text evidence="1">Belongs to the ketol-acid reductoisomerase family.</text>
</comment>
<comment type="sequence caution" evidence="4">
    <conflict type="erroneous initiation">
        <sequence resource="EMBL-CDS" id="AAB85917"/>
    </conflict>
</comment>
<accession>O27491</accession>
<protein>
    <recommendedName>
        <fullName evidence="1">Ketol-acid reductoisomerase (NADP(+))</fullName>
        <shortName evidence="1">KARI</shortName>
        <ecNumber evidence="1">1.1.1.86</ecNumber>
    </recommendedName>
    <alternativeName>
        <fullName evidence="1">Acetohydroxy-acid isomeroreductase</fullName>
        <shortName evidence="1">AHIR</shortName>
    </alternativeName>
    <alternativeName>
        <fullName evidence="1">Alpha-keto-beta-hydroxylacyl reductoisomerase</fullName>
    </alternativeName>
    <alternativeName>
        <fullName evidence="1">Ketol-acid reductoisomerase type 1</fullName>
    </alternativeName>
    <alternativeName>
        <fullName evidence="1">Ketol-acid reductoisomerase type I</fullName>
    </alternativeName>
</protein>
<dbReference type="EC" id="1.1.1.86" evidence="1"/>
<dbReference type="EMBL" id="AE000666">
    <property type="protein sequence ID" value="AAB85917.1"/>
    <property type="status" value="ALT_INIT"/>
    <property type="molecule type" value="Genomic_DNA"/>
</dbReference>
<dbReference type="PIR" id="A69059">
    <property type="entry name" value="A69059"/>
</dbReference>
<dbReference type="RefSeq" id="WP_048061053.1">
    <property type="nucleotide sequence ID" value="NC_000916.1"/>
</dbReference>
<dbReference type="SMR" id="O27491"/>
<dbReference type="FunCoup" id="O27491">
    <property type="interactions" value="142"/>
</dbReference>
<dbReference type="STRING" id="187420.MTH_1442"/>
<dbReference type="PaxDb" id="187420-MTH_1442"/>
<dbReference type="EnsemblBacteria" id="AAB85917">
    <property type="protein sequence ID" value="AAB85917"/>
    <property type="gene ID" value="MTH_1442"/>
</dbReference>
<dbReference type="GeneID" id="82297876"/>
<dbReference type="KEGG" id="mth:MTH_1442"/>
<dbReference type="PATRIC" id="fig|187420.15.peg.1404"/>
<dbReference type="HOGENOM" id="CLU_033821_0_1_2"/>
<dbReference type="InParanoid" id="O27491"/>
<dbReference type="BioCyc" id="MetaCyc:MONOMER-11920"/>
<dbReference type="UniPathway" id="UPA00047">
    <property type="reaction ID" value="UER00056"/>
</dbReference>
<dbReference type="UniPathway" id="UPA00049">
    <property type="reaction ID" value="UER00060"/>
</dbReference>
<dbReference type="Proteomes" id="UP000005223">
    <property type="component" value="Chromosome"/>
</dbReference>
<dbReference type="GO" id="GO:0004455">
    <property type="term" value="F:ketol-acid reductoisomerase activity"/>
    <property type="evidence" value="ECO:0007669"/>
    <property type="project" value="UniProtKB-UniRule"/>
</dbReference>
<dbReference type="GO" id="GO:0000287">
    <property type="term" value="F:magnesium ion binding"/>
    <property type="evidence" value="ECO:0007669"/>
    <property type="project" value="UniProtKB-UniRule"/>
</dbReference>
<dbReference type="GO" id="GO:0050661">
    <property type="term" value="F:NADP binding"/>
    <property type="evidence" value="ECO:0007669"/>
    <property type="project" value="InterPro"/>
</dbReference>
<dbReference type="GO" id="GO:0009097">
    <property type="term" value="P:isoleucine biosynthetic process"/>
    <property type="evidence" value="ECO:0007669"/>
    <property type="project" value="UniProtKB-UniRule"/>
</dbReference>
<dbReference type="GO" id="GO:0009099">
    <property type="term" value="P:L-valine biosynthetic process"/>
    <property type="evidence" value="ECO:0007669"/>
    <property type="project" value="UniProtKB-UniRule"/>
</dbReference>
<dbReference type="FunFam" id="3.40.50.720:FF:000023">
    <property type="entry name" value="Ketol-acid reductoisomerase (NADP(+))"/>
    <property type="match status" value="1"/>
</dbReference>
<dbReference type="Gene3D" id="6.10.240.10">
    <property type="match status" value="1"/>
</dbReference>
<dbReference type="Gene3D" id="3.40.50.720">
    <property type="entry name" value="NAD(P)-binding Rossmann-like Domain"/>
    <property type="match status" value="1"/>
</dbReference>
<dbReference type="HAMAP" id="MF_00435">
    <property type="entry name" value="IlvC"/>
    <property type="match status" value="1"/>
</dbReference>
<dbReference type="InterPro" id="IPR008927">
    <property type="entry name" value="6-PGluconate_DH-like_C_sf"/>
</dbReference>
<dbReference type="InterPro" id="IPR013023">
    <property type="entry name" value="KARI"/>
</dbReference>
<dbReference type="InterPro" id="IPR000506">
    <property type="entry name" value="KARI_C"/>
</dbReference>
<dbReference type="InterPro" id="IPR013116">
    <property type="entry name" value="KARI_N"/>
</dbReference>
<dbReference type="InterPro" id="IPR014359">
    <property type="entry name" value="KARI_prok"/>
</dbReference>
<dbReference type="InterPro" id="IPR036291">
    <property type="entry name" value="NAD(P)-bd_dom_sf"/>
</dbReference>
<dbReference type="NCBIfam" id="TIGR00465">
    <property type="entry name" value="ilvC"/>
    <property type="match status" value="1"/>
</dbReference>
<dbReference type="NCBIfam" id="NF004017">
    <property type="entry name" value="PRK05479.1"/>
    <property type="match status" value="1"/>
</dbReference>
<dbReference type="NCBIfam" id="NF009940">
    <property type="entry name" value="PRK13403.1"/>
    <property type="match status" value="1"/>
</dbReference>
<dbReference type="PANTHER" id="PTHR21371">
    <property type="entry name" value="KETOL-ACID REDUCTOISOMERASE, MITOCHONDRIAL"/>
    <property type="match status" value="1"/>
</dbReference>
<dbReference type="PANTHER" id="PTHR21371:SF1">
    <property type="entry name" value="KETOL-ACID REDUCTOISOMERASE, MITOCHONDRIAL"/>
    <property type="match status" value="1"/>
</dbReference>
<dbReference type="Pfam" id="PF01450">
    <property type="entry name" value="KARI_C"/>
    <property type="match status" value="1"/>
</dbReference>
<dbReference type="Pfam" id="PF07991">
    <property type="entry name" value="KARI_N"/>
    <property type="match status" value="1"/>
</dbReference>
<dbReference type="PIRSF" id="PIRSF000116">
    <property type="entry name" value="IlvC_gammaproteo"/>
    <property type="match status" value="1"/>
</dbReference>
<dbReference type="SUPFAM" id="SSF48179">
    <property type="entry name" value="6-phosphogluconate dehydrogenase C-terminal domain-like"/>
    <property type="match status" value="1"/>
</dbReference>
<dbReference type="SUPFAM" id="SSF51735">
    <property type="entry name" value="NAD(P)-binding Rossmann-fold domains"/>
    <property type="match status" value="1"/>
</dbReference>
<dbReference type="PROSITE" id="PS51851">
    <property type="entry name" value="KARI_C"/>
    <property type="match status" value="1"/>
</dbReference>
<dbReference type="PROSITE" id="PS51850">
    <property type="entry name" value="KARI_N"/>
    <property type="match status" value="1"/>
</dbReference>
<proteinExistence type="inferred from homology"/>
<keyword id="KW-0028">Amino-acid biosynthesis</keyword>
<keyword id="KW-0100">Branched-chain amino acid biosynthesis</keyword>
<keyword id="KW-0460">Magnesium</keyword>
<keyword id="KW-0479">Metal-binding</keyword>
<keyword id="KW-0521">NADP</keyword>
<keyword id="KW-0560">Oxidoreductase</keyword>
<keyword id="KW-1185">Reference proteome</keyword>
<evidence type="ECO:0000255" key="1">
    <source>
        <dbReference type="HAMAP-Rule" id="MF_00435"/>
    </source>
</evidence>
<evidence type="ECO:0000255" key="2">
    <source>
        <dbReference type="PROSITE-ProRule" id="PRU01197"/>
    </source>
</evidence>
<evidence type="ECO:0000255" key="3">
    <source>
        <dbReference type="PROSITE-ProRule" id="PRU01198"/>
    </source>
</evidence>
<evidence type="ECO:0000305" key="4"/>
<organism>
    <name type="scientific">Methanothermobacter thermautotrophicus (strain ATCC 29096 / DSM 1053 / JCM 10044 / NBRC 100330 / Delta H)</name>
    <name type="common">Methanobacterium thermoautotrophicum</name>
    <dbReference type="NCBI Taxonomy" id="187420"/>
    <lineage>
        <taxon>Archaea</taxon>
        <taxon>Methanobacteriati</taxon>
        <taxon>Methanobacteriota</taxon>
        <taxon>Methanomada group</taxon>
        <taxon>Methanobacteria</taxon>
        <taxon>Methanobacteriales</taxon>
        <taxon>Methanobacteriaceae</taxon>
        <taxon>Methanothermobacter</taxon>
    </lineage>
</organism>
<reference key="1">
    <citation type="journal article" date="1997" name="J. Bacteriol.">
        <title>Complete genome sequence of Methanobacterium thermoautotrophicum deltaH: functional analysis and comparative genomics.</title>
        <authorList>
            <person name="Smith D.R."/>
            <person name="Doucette-Stamm L.A."/>
            <person name="Deloughery C."/>
            <person name="Lee H.-M."/>
            <person name="Dubois J."/>
            <person name="Aldredge T."/>
            <person name="Bashirzadeh R."/>
            <person name="Blakely D."/>
            <person name="Cook R."/>
            <person name="Gilbert K."/>
            <person name="Harrison D."/>
            <person name="Hoang L."/>
            <person name="Keagle P."/>
            <person name="Lumm W."/>
            <person name="Pothier B."/>
            <person name="Qiu D."/>
            <person name="Spadafora R."/>
            <person name="Vicare R."/>
            <person name="Wang Y."/>
            <person name="Wierzbowski J."/>
            <person name="Gibson R."/>
            <person name="Jiwani N."/>
            <person name="Caruso A."/>
            <person name="Bush D."/>
            <person name="Safer H."/>
            <person name="Patwell D."/>
            <person name="Prabhakar S."/>
            <person name="McDougall S."/>
            <person name="Shimer G."/>
            <person name="Goyal A."/>
            <person name="Pietrovski S."/>
            <person name="Church G.M."/>
            <person name="Daniels C.J."/>
            <person name="Mao J.-I."/>
            <person name="Rice P."/>
            <person name="Noelling J."/>
            <person name="Reeve J.N."/>
        </authorList>
    </citation>
    <scope>NUCLEOTIDE SEQUENCE [LARGE SCALE GENOMIC DNA]</scope>
    <source>
        <strain>ATCC 29096 / DSM 1053 / JCM 10044 / NBRC 100330 / Delta H</strain>
    </source>
</reference>
<feature type="chain" id="PRO_0000151395" description="Ketol-acid reductoisomerase (NADP(+))">
    <location>
        <begin position="1"/>
        <end position="328"/>
    </location>
</feature>
<feature type="domain" description="KARI N-terminal Rossmann" evidence="2">
    <location>
        <begin position="1"/>
        <end position="181"/>
    </location>
</feature>
<feature type="domain" description="KARI C-terminal knotted" evidence="3">
    <location>
        <begin position="182"/>
        <end position="327"/>
    </location>
</feature>
<feature type="active site" evidence="1">
    <location>
        <position position="107"/>
    </location>
</feature>
<feature type="binding site" evidence="1">
    <location>
        <begin position="24"/>
        <end position="27"/>
    </location>
    <ligand>
        <name>NADP(+)</name>
        <dbReference type="ChEBI" id="CHEBI:58349"/>
    </ligand>
</feature>
<feature type="binding site" evidence="1">
    <location>
        <position position="47"/>
    </location>
    <ligand>
        <name>NADP(+)</name>
        <dbReference type="ChEBI" id="CHEBI:58349"/>
    </ligand>
</feature>
<feature type="binding site" evidence="1">
    <location>
        <position position="52"/>
    </location>
    <ligand>
        <name>NADP(+)</name>
        <dbReference type="ChEBI" id="CHEBI:58349"/>
    </ligand>
</feature>
<feature type="binding site" evidence="1">
    <location>
        <begin position="82"/>
        <end position="85"/>
    </location>
    <ligand>
        <name>NADP(+)</name>
        <dbReference type="ChEBI" id="CHEBI:58349"/>
    </ligand>
</feature>
<feature type="binding site" evidence="1">
    <location>
        <position position="133"/>
    </location>
    <ligand>
        <name>NADP(+)</name>
        <dbReference type="ChEBI" id="CHEBI:58349"/>
    </ligand>
</feature>
<feature type="binding site" evidence="1">
    <location>
        <position position="190"/>
    </location>
    <ligand>
        <name>Mg(2+)</name>
        <dbReference type="ChEBI" id="CHEBI:18420"/>
        <label>1</label>
    </ligand>
</feature>
<feature type="binding site" evidence="1">
    <location>
        <position position="190"/>
    </location>
    <ligand>
        <name>Mg(2+)</name>
        <dbReference type="ChEBI" id="CHEBI:18420"/>
        <label>2</label>
    </ligand>
</feature>
<feature type="binding site" evidence="1">
    <location>
        <position position="194"/>
    </location>
    <ligand>
        <name>Mg(2+)</name>
        <dbReference type="ChEBI" id="CHEBI:18420"/>
        <label>1</label>
    </ligand>
</feature>
<feature type="binding site" evidence="1">
    <location>
        <position position="226"/>
    </location>
    <ligand>
        <name>Mg(2+)</name>
        <dbReference type="ChEBI" id="CHEBI:18420"/>
        <label>2</label>
    </ligand>
</feature>
<feature type="binding site" evidence="1">
    <location>
        <position position="230"/>
    </location>
    <ligand>
        <name>Mg(2+)</name>
        <dbReference type="ChEBI" id="CHEBI:18420"/>
        <label>2</label>
    </ligand>
</feature>
<feature type="binding site" evidence="1">
    <location>
        <position position="251"/>
    </location>
    <ligand>
        <name>substrate</name>
    </ligand>
</feature>
<gene>
    <name evidence="1" type="primary">ilvC</name>
    <name type="ordered locus">MTH_1442</name>
</gene>